<gene>
    <name evidence="2" type="primary">ECSIT</name>
    <name type="ORF">QccE-10646</name>
</gene>
<evidence type="ECO:0000250" key="1"/>
<evidence type="ECO:0000250" key="2">
    <source>
        <dbReference type="UniProtKB" id="Q9BQ95"/>
    </source>
</evidence>
<evidence type="ECO:0000250" key="3">
    <source>
        <dbReference type="UniProtKB" id="Q9QZH6"/>
    </source>
</evidence>
<evidence type="ECO:0000255" key="4"/>
<evidence type="ECO:0000256" key="5">
    <source>
        <dbReference type="SAM" id="MobiDB-lite"/>
    </source>
</evidence>
<evidence type="ECO:0000305" key="6"/>
<protein>
    <recommendedName>
        <fullName evidence="2">Evolutionarily conserved signaling intermediate in Toll pathway, mitochondrial</fullName>
    </recommendedName>
</protein>
<proteinExistence type="evidence at transcript level"/>
<comment type="function">
    <text evidence="1 2">Adapter protein that plays a role in different signaling pathways including TLRs and IL-1 pathways or innate antiviral induction signaling. Plays a role in the activation of NF-kappa-B by forming a signal complex with TRAF6 and TAK1/MAP3K7 to activate TAK1/MAP3K7 leading to activation of IKKs. Once ubiquitinated, interacts with the dissociated RELA and NFKB1 proteins and translocates to the nucleus where it induces NF-kappa-B-dependent gene expression. Plays a role in innate antiviral immune response by bridging the pattern recognition receptors RIGI and MDA5/IFIT1 to the MAVS complex at the mitochondrion (By similarity). Promotes proteolytic activation of MAP3K1. Involved in the BMP signaling pathway. Required for normal embryonic development (By similarity).</text>
</comment>
<comment type="function">
    <text evidence="2">As part of the MCIA complex, involved in the assembly of the mitochondrial complex I.</text>
</comment>
<comment type="subunit">
    <text evidence="2 3">Interacts with MAP3K1, SMAD4 and TRAF6. Interacts with SMAD1 only after BMP4-treatment (By similarity). Part of the mitochondrial complex I assembly/MCIA complex that comprises at least the core subunits TMEM126B, NDUFAF1, ECSIT and ACAD9 and complement subunits such as COA1 and TMEM186. Interacts with NDUFAF1. Interacts with ACAD9. Interacts with TRIM59. Interacts with TMEM70 and TMEM242. Interacts (when ubiquitinated) with NF-kappa-B subunits RELA and NFKB1. Interacts with RIGI, IFIT1 and MAVS; these interactions promote RLR-mediated type I IFN induction. Interacts with SQSTM1; this interaction inhibits TLR4 signaling via functional regulation of the TRAF6-ECSIT complex. Interacts with cereblon/CRBN; this interaction inhibits the ubiquitination of ECSIT (By similarity).</text>
</comment>
<comment type="subcellular location">
    <subcellularLocation>
        <location evidence="2">Cytoplasm</location>
    </subcellularLocation>
    <subcellularLocation>
        <location evidence="2">Nucleus</location>
    </subcellularLocation>
    <subcellularLocation>
        <location evidence="2">Mitochondrion</location>
    </subcellularLocation>
</comment>
<comment type="PTM">
    <text evidence="2">Ubiquitinated on Lys-372; leading to translocation in the nucleus together with RELA and NFKB1 and expression of NF-kappa-B-dependent genes.</text>
</comment>
<comment type="similarity">
    <text evidence="6">Belongs to the ECSIT family.</text>
</comment>
<organism>
    <name type="scientific">Macaca fascicularis</name>
    <name type="common">Crab-eating macaque</name>
    <name type="synonym">Cynomolgus monkey</name>
    <dbReference type="NCBI Taxonomy" id="9541"/>
    <lineage>
        <taxon>Eukaryota</taxon>
        <taxon>Metazoa</taxon>
        <taxon>Chordata</taxon>
        <taxon>Craniata</taxon>
        <taxon>Vertebrata</taxon>
        <taxon>Euteleostomi</taxon>
        <taxon>Mammalia</taxon>
        <taxon>Eutheria</taxon>
        <taxon>Euarchontoglires</taxon>
        <taxon>Primates</taxon>
        <taxon>Haplorrhini</taxon>
        <taxon>Catarrhini</taxon>
        <taxon>Cercopithecidae</taxon>
        <taxon>Cercopithecinae</taxon>
        <taxon>Macaca</taxon>
    </lineage>
</organism>
<feature type="transit peptide" description="Mitochondrion" evidence="4">
    <location>
        <begin position="1"/>
        <end position="48"/>
    </location>
</feature>
<feature type="chain" id="PRO_0000291986" description="Evolutionarily conserved signaling intermediate in Toll pathway, mitochondrial">
    <location>
        <begin position="49"/>
        <end position="430"/>
    </location>
</feature>
<feature type="region of interest" description="Disordered" evidence="5">
    <location>
        <begin position="41"/>
        <end position="66"/>
    </location>
</feature>
<feature type="region of interest" description="Disordered" evidence="5">
    <location>
        <begin position="400"/>
        <end position="430"/>
    </location>
</feature>
<feature type="compositionally biased region" description="Polar residues" evidence="5">
    <location>
        <begin position="47"/>
        <end position="56"/>
    </location>
</feature>
<feature type="compositionally biased region" description="Acidic residues" evidence="5">
    <location>
        <begin position="411"/>
        <end position="420"/>
    </location>
</feature>
<feature type="cross-link" description="Glycyl lysine isopeptide (Lys-Gly) (interchain with G-Cter in ubiquitin)" evidence="2">
    <location>
        <position position="372"/>
    </location>
</feature>
<name>ECSIT_MACFA</name>
<reference key="1">
    <citation type="submission" date="2005-06" db="EMBL/GenBank/DDBJ databases">
        <title>DNA sequences of macaque genes expressed in brain or testis and its evolutionary implications.</title>
        <authorList>
            <consortium name="International consortium for macaque cDNA sequencing and analysis"/>
        </authorList>
    </citation>
    <scope>NUCLEOTIDE SEQUENCE [LARGE SCALE MRNA]</scope>
    <source>
        <tissue>Brain cortex</tissue>
    </source>
</reference>
<sequence length="430" mass="49091">MSWVQATLLARGLCRAWGGICRAALPGTSISQVPRQLPRGLHCSAAPHSSEQSLVSSPPEPRQRPTKALVPYEDLFGQAPSGERDKASFLQAVQKFGEHSVRKRGHIDFIYLALRKMREYGVERDLAVYNQLLDIFPKEVFRPRNVIQRIFVHYPRQQECGIAVLEQMESHGVMPNKETEFLLIQIFGRKSYPMLKLLRLKMWFPRFMNINPFPVPRDLSQDPVELATFGLRHMEPDLSARVTIYQVPLPKDSTGAADPPQPHIVGIQSPDQQAALARHNPARPIFVEGPFSLWLRNKCVYYHILRADLLPPEEREVEETPEEWNLYYPMQLDLEYSRSGWDDYEFDINEVEEGPVFAMCMAGAHDQATLAKWIQGLQETNPTLAQIPVVFRLTRATGELHTSSAGLEEPPPPEDHEEDDSRQRQQQGQS</sequence>
<accession>Q4R5Q4</accession>
<keyword id="KW-0963">Cytoplasm</keyword>
<keyword id="KW-0391">Immunity</keyword>
<keyword id="KW-0399">Innate immunity</keyword>
<keyword id="KW-1017">Isopeptide bond</keyword>
<keyword id="KW-0496">Mitochondrion</keyword>
<keyword id="KW-0539">Nucleus</keyword>
<keyword id="KW-1185">Reference proteome</keyword>
<keyword id="KW-0809">Transit peptide</keyword>
<keyword id="KW-0832">Ubl conjugation</keyword>
<dbReference type="EMBL" id="AB169489">
    <property type="protein sequence ID" value="BAE01571.1"/>
    <property type="molecule type" value="mRNA"/>
</dbReference>
<dbReference type="RefSeq" id="NP_001306339.1">
    <property type="nucleotide sequence ID" value="NM_001319410.1"/>
</dbReference>
<dbReference type="RefSeq" id="XP_005588112.1">
    <property type="nucleotide sequence ID" value="XM_005588055.2"/>
</dbReference>
<dbReference type="RefSeq" id="XP_015296226.1">
    <property type="nucleotide sequence ID" value="XM_015440740.1"/>
</dbReference>
<dbReference type="RefSeq" id="XP_015296227.1">
    <property type="nucleotide sequence ID" value="XM_015440741.1"/>
</dbReference>
<dbReference type="RefSeq" id="XP_045235009.2">
    <property type="nucleotide sequence ID" value="XM_045379074.2"/>
</dbReference>
<dbReference type="RefSeq" id="XP_045235010.2">
    <property type="nucleotide sequence ID" value="XM_045379075.2"/>
</dbReference>
<dbReference type="RefSeq" id="XP_065391500.1">
    <property type="nucleotide sequence ID" value="XM_065535428.1"/>
</dbReference>
<dbReference type="RefSeq" id="XP_065391501.1">
    <property type="nucleotide sequence ID" value="XM_065535429.1"/>
</dbReference>
<dbReference type="RefSeq" id="XP_065391502.1">
    <property type="nucleotide sequence ID" value="XM_065535430.1"/>
</dbReference>
<dbReference type="SMR" id="Q4R5Q4"/>
<dbReference type="STRING" id="9541.ENSMFAP00000031214"/>
<dbReference type="Ensembl" id="ENSMFAT00000005429.2">
    <property type="protein sequence ID" value="ENSMFAP00000031215.2"/>
    <property type="gene ID" value="ENSMFAG00000036660.2"/>
</dbReference>
<dbReference type="GeneID" id="107126402"/>
<dbReference type="GeneTree" id="ENSGT00390000005147"/>
<dbReference type="Proteomes" id="UP000233100">
    <property type="component" value="Chromosome 19"/>
</dbReference>
<dbReference type="Bgee" id="ENSMFAG00000036660">
    <property type="expression patterns" value="Expressed in heart and 13 other cell types or tissues"/>
</dbReference>
<dbReference type="GO" id="GO:0005737">
    <property type="term" value="C:cytoplasm"/>
    <property type="evidence" value="ECO:0000250"/>
    <property type="project" value="UniProtKB"/>
</dbReference>
<dbReference type="GO" id="GO:0005739">
    <property type="term" value="C:mitochondrion"/>
    <property type="evidence" value="ECO:0000250"/>
    <property type="project" value="UniProtKB"/>
</dbReference>
<dbReference type="GO" id="GO:0005634">
    <property type="term" value="C:nucleus"/>
    <property type="evidence" value="ECO:0000250"/>
    <property type="project" value="UniProtKB"/>
</dbReference>
<dbReference type="GO" id="GO:0007178">
    <property type="term" value="P:cell surface receptor protein serine/threonine kinase signaling pathway"/>
    <property type="evidence" value="ECO:0007669"/>
    <property type="project" value="TreeGrafter"/>
</dbReference>
<dbReference type="GO" id="GO:0045087">
    <property type="term" value="P:innate immune response"/>
    <property type="evidence" value="ECO:0007669"/>
    <property type="project" value="UniProtKB-KW"/>
</dbReference>
<dbReference type="GO" id="GO:0051341">
    <property type="term" value="P:regulation of oxidoreductase activity"/>
    <property type="evidence" value="ECO:0000250"/>
    <property type="project" value="UniProtKB"/>
</dbReference>
<dbReference type="GO" id="GO:0061635">
    <property type="term" value="P:regulation of protein complex stability"/>
    <property type="evidence" value="ECO:0000250"/>
    <property type="project" value="UniProtKB"/>
</dbReference>
<dbReference type="InterPro" id="IPR029342">
    <property type="entry name" value="ECIST_C"/>
</dbReference>
<dbReference type="InterPro" id="IPR010418">
    <property type="entry name" value="ECSIT"/>
</dbReference>
<dbReference type="InterPro" id="IPR046448">
    <property type="entry name" value="ECSIT_N"/>
</dbReference>
<dbReference type="PANTHER" id="PTHR13113">
    <property type="entry name" value="ECSIT EVOLUTIONARILY CONSERVED SIGNALING INTERMEDIATE IN TOLL PATHWAYS"/>
    <property type="match status" value="1"/>
</dbReference>
<dbReference type="PANTHER" id="PTHR13113:SF1">
    <property type="entry name" value="EVOLUTIONARILY CONSERVED SIGNALING INTERMEDIATE IN TOLL PATHWAY, MITOCHONDRIAL"/>
    <property type="match status" value="1"/>
</dbReference>
<dbReference type="Pfam" id="PF14784">
    <property type="entry name" value="ECSIT_C"/>
    <property type="match status" value="1"/>
</dbReference>
<dbReference type="Pfam" id="PF06239">
    <property type="entry name" value="ECSIT_N"/>
    <property type="match status" value="1"/>
</dbReference>
<dbReference type="SMART" id="SM01284">
    <property type="entry name" value="ECSIT_Cterm"/>
    <property type="match status" value="1"/>
</dbReference>